<comment type="catalytic activity">
    <reaction evidence="1">
        <text>tRNA(Arg) + L-arginine + ATP = L-arginyl-tRNA(Arg) + AMP + diphosphate</text>
        <dbReference type="Rhea" id="RHEA:20301"/>
        <dbReference type="Rhea" id="RHEA-COMP:9658"/>
        <dbReference type="Rhea" id="RHEA-COMP:9673"/>
        <dbReference type="ChEBI" id="CHEBI:30616"/>
        <dbReference type="ChEBI" id="CHEBI:32682"/>
        <dbReference type="ChEBI" id="CHEBI:33019"/>
        <dbReference type="ChEBI" id="CHEBI:78442"/>
        <dbReference type="ChEBI" id="CHEBI:78513"/>
        <dbReference type="ChEBI" id="CHEBI:456215"/>
        <dbReference type="EC" id="6.1.1.19"/>
    </reaction>
</comment>
<comment type="subunit">
    <text evidence="1">Monomer.</text>
</comment>
<comment type="subcellular location">
    <subcellularLocation>
        <location evidence="1">Cytoplasm</location>
    </subcellularLocation>
</comment>
<comment type="similarity">
    <text evidence="1">Belongs to the class-I aminoacyl-tRNA synthetase family.</text>
</comment>
<keyword id="KW-0030">Aminoacyl-tRNA synthetase</keyword>
<keyword id="KW-0067">ATP-binding</keyword>
<keyword id="KW-0963">Cytoplasm</keyword>
<keyword id="KW-0436">Ligase</keyword>
<keyword id="KW-0547">Nucleotide-binding</keyword>
<keyword id="KW-0648">Protein biosynthesis</keyword>
<keyword id="KW-1185">Reference proteome</keyword>
<evidence type="ECO:0000255" key="1">
    <source>
        <dbReference type="HAMAP-Rule" id="MF_00123"/>
    </source>
</evidence>
<reference key="1">
    <citation type="journal article" date="2010" name="Appl. Environ. Microbiol.">
        <title>The genome sequence of Psychrobacter arcticus 273-4, a psychroactive Siberian permafrost bacterium, reveals mechanisms for adaptation to low-temperature growth.</title>
        <authorList>
            <person name="Ayala-del-Rio H.L."/>
            <person name="Chain P.S."/>
            <person name="Grzymski J.J."/>
            <person name="Ponder M.A."/>
            <person name="Ivanova N."/>
            <person name="Bergholz P.W."/>
            <person name="Di Bartolo G."/>
            <person name="Hauser L."/>
            <person name="Land M."/>
            <person name="Bakermans C."/>
            <person name="Rodrigues D."/>
            <person name="Klappenbach J."/>
            <person name="Zarka D."/>
            <person name="Larimer F."/>
            <person name="Richardson P."/>
            <person name="Murray A."/>
            <person name="Thomashow M."/>
            <person name="Tiedje J.M."/>
        </authorList>
    </citation>
    <scope>NUCLEOTIDE SEQUENCE [LARGE SCALE GENOMIC DNA]</scope>
    <source>
        <strain>DSM 17307 / VKM B-2377 / 273-4</strain>
    </source>
</reference>
<dbReference type="EC" id="6.1.1.19" evidence="1"/>
<dbReference type="EMBL" id="CP000082">
    <property type="protein sequence ID" value="AAZ19794.1"/>
    <property type="molecule type" value="Genomic_DNA"/>
</dbReference>
<dbReference type="RefSeq" id="WP_011281203.1">
    <property type="nucleotide sequence ID" value="NC_007204.1"/>
</dbReference>
<dbReference type="SMR" id="Q4FQB4"/>
<dbReference type="STRING" id="259536.Psyc_1946"/>
<dbReference type="KEGG" id="par:Psyc_1946"/>
<dbReference type="eggNOG" id="COG0018">
    <property type="taxonomic scope" value="Bacteria"/>
</dbReference>
<dbReference type="HOGENOM" id="CLU_006406_0_1_6"/>
<dbReference type="OrthoDB" id="9803211at2"/>
<dbReference type="Proteomes" id="UP000000546">
    <property type="component" value="Chromosome"/>
</dbReference>
<dbReference type="GO" id="GO:0005737">
    <property type="term" value="C:cytoplasm"/>
    <property type="evidence" value="ECO:0007669"/>
    <property type="project" value="UniProtKB-SubCell"/>
</dbReference>
<dbReference type="GO" id="GO:0004814">
    <property type="term" value="F:arginine-tRNA ligase activity"/>
    <property type="evidence" value="ECO:0007669"/>
    <property type="project" value="UniProtKB-UniRule"/>
</dbReference>
<dbReference type="GO" id="GO:0005524">
    <property type="term" value="F:ATP binding"/>
    <property type="evidence" value="ECO:0007669"/>
    <property type="project" value="UniProtKB-UniRule"/>
</dbReference>
<dbReference type="GO" id="GO:0006420">
    <property type="term" value="P:arginyl-tRNA aminoacylation"/>
    <property type="evidence" value="ECO:0007669"/>
    <property type="project" value="UniProtKB-UniRule"/>
</dbReference>
<dbReference type="CDD" id="cd00671">
    <property type="entry name" value="ArgRS_core"/>
    <property type="match status" value="1"/>
</dbReference>
<dbReference type="Gene3D" id="3.30.1360.70">
    <property type="entry name" value="Arginyl tRNA synthetase N-terminal domain"/>
    <property type="match status" value="1"/>
</dbReference>
<dbReference type="Gene3D" id="3.40.50.620">
    <property type="entry name" value="HUPs"/>
    <property type="match status" value="1"/>
</dbReference>
<dbReference type="Gene3D" id="1.10.730.10">
    <property type="entry name" value="Isoleucyl-tRNA Synthetase, Domain 1"/>
    <property type="match status" value="1"/>
</dbReference>
<dbReference type="HAMAP" id="MF_00123">
    <property type="entry name" value="Arg_tRNA_synth"/>
    <property type="match status" value="1"/>
</dbReference>
<dbReference type="InterPro" id="IPR001278">
    <property type="entry name" value="Arg-tRNA-ligase"/>
</dbReference>
<dbReference type="InterPro" id="IPR005148">
    <property type="entry name" value="Arg-tRNA-synth_N"/>
</dbReference>
<dbReference type="InterPro" id="IPR036695">
    <property type="entry name" value="Arg-tRNA-synth_N_sf"/>
</dbReference>
<dbReference type="InterPro" id="IPR035684">
    <property type="entry name" value="ArgRS_core"/>
</dbReference>
<dbReference type="InterPro" id="IPR008909">
    <property type="entry name" value="DALR_anticod-bd"/>
</dbReference>
<dbReference type="InterPro" id="IPR014729">
    <property type="entry name" value="Rossmann-like_a/b/a_fold"/>
</dbReference>
<dbReference type="InterPro" id="IPR009080">
    <property type="entry name" value="tRNAsynth_Ia_anticodon-bd"/>
</dbReference>
<dbReference type="NCBIfam" id="TIGR00456">
    <property type="entry name" value="argS"/>
    <property type="match status" value="1"/>
</dbReference>
<dbReference type="PANTHER" id="PTHR11956:SF5">
    <property type="entry name" value="ARGININE--TRNA LIGASE, CYTOPLASMIC"/>
    <property type="match status" value="1"/>
</dbReference>
<dbReference type="PANTHER" id="PTHR11956">
    <property type="entry name" value="ARGINYL-TRNA SYNTHETASE"/>
    <property type="match status" value="1"/>
</dbReference>
<dbReference type="Pfam" id="PF03485">
    <property type="entry name" value="Arg_tRNA_synt_N"/>
    <property type="match status" value="1"/>
</dbReference>
<dbReference type="Pfam" id="PF05746">
    <property type="entry name" value="DALR_1"/>
    <property type="match status" value="1"/>
</dbReference>
<dbReference type="Pfam" id="PF00750">
    <property type="entry name" value="tRNA-synt_1d"/>
    <property type="match status" value="2"/>
</dbReference>
<dbReference type="PRINTS" id="PR01038">
    <property type="entry name" value="TRNASYNTHARG"/>
</dbReference>
<dbReference type="SMART" id="SM01016">
    <property type="entry name" value="Arg_tRNA_synt_N"/>
    <property type="match status" value="1"/>
</dbReference>
<dbReference type="SMART" id="SM00836">
    <property type="entry name" value="DALR_1"/>
    <property type="match status" value="1"/>
</dbReference>
<dbReference type="SUPFAM" id="SSF47323">
    <property type="entry name" value="Anticodon-binding domain of a subclass of class I aminoacyl-tRNA synthetases"/>
    <property type="match status" value="1"/>
</dbReference>
<dbReference type="SUPFAM" id="SSF55190">
    <property type="entry name" value="Arginyl-tRNA synthetase (ArgRS), N-terminal 'additional' domain"/>
    <property type="match status" value="1"/>
</dbReference>
<dbReference type="SUPFAM" id="SSF52374">
    <property type="entry name" value="Nucleotidylyl transferase"/>
    <property type="match status" value="1"/>
</dbReference>
<organism>
    <name type="scientific">Psychrobacter arcticus (strain DSM 17307 / VKM B-2377 / 273-4)</name>
    <dbReference type="NCBI Taxonomy" id="259536"/>
    <lineage>
        <taxon>Bacteria</taxon>
        <taxon>Pseudomonadati</taxon>
        <taxon>Pseudomonadota</taxon>
        <taxon>Gammaproteobacteria</taxon>
        <taxon>Moraxellales</taxon>
        <taxon>Moraxellaceae</taxon>
        <taxon>Psychrobacter</taxon>
    </lineage>
</organism>
<proteinExistence type="inferred from homology"/>
<accession>Q4FQB4</accession>
<feature type="chain" id="PRO_0000242073" description="Arginine--tRNA ligase">
    <location>
        <begin position="1"/>
        <end position="609"/>
    </location>
</feature>
<feature type="short sequence motif" description="'HIGH' region">
    <location>
        <begin position="132"/>
        <end position="142"/>
    </location>
</feature>
<gene>
    <name evidence="1" type="primary">argS</name>
    <name type="ordered locus">Psyc_1946</name>
</gene>
<protein>
    <recommendedName>
        <fullName evidence="1">Arginine--tRNA ligase</fullName>
        <ecNumber evidence="1">6.1.1.19</ecNumber>
    </recommendedName>
    <alternativeName>
        <fullName evidence="1">Arginyl-tRNA synthetase</fullName>
        <shortName evidence="1">ArgRS</shortName>
    </alternativeName>
</protein>
<sequence>MSQAQINTLASLFDSAIAVLKNDGELPADWQNNSQITRTKDASHGDFASNIALTAAKAAKANPRQVAEKIVNALPENQDIRQIEIAGPGFINVFLNTEAKFAVLDDIFNLQAGFGLSKQFDGQKVQVEFVSANPTSSLHVGHGRGAAFGMSVSNLLEAIGYDVTREYYVNDAGRQMDILATSTYLRYLETNGEPVTFPVNGYQGDYVSDIAQTLKTQHADTYVHRFAEIAKDVPEDAQFEINADGEKVLLSGDKEAHIDGLIANSKALLGSGYELFLNAALSSILADIKDDLNDFGVSYECWFSERSIDSEIEPVLQILEDKGYLYEKDGNIWFKSTDFGDEKDRVVRRANGQSTYFASDIAYHKNKFDRGFDKVVNVWGADHHGYVPRVKAALLALGIDADRLDVVLVQFVALWRGDEKVQMSSRSGKFVTLRELRHEVGNDAARFYYVARKPEVHVDFDLELAKSQSKDNLVYYIQYAHARVCRVLEKLEASGLSVNDAMGAEQQELLVASSEEELIKLLAAYPATLLRSATGYEPHILTNYLKELAALFHGWYDSNRILPVSLTSGETPSADEMAMMQARLRLSKAVRLVISNGLGLLGLSAPSSM</sequence>
<name>SYR_PSYA2</name>